<keyword id="KW-0414">Isoprene biosynthesis</keyword>
<keyword id="KW-0548">Nucleotidyltransferase</keyword>
<keyword id="KW-1185">Reference proteome</keyword>
<keyword id="KW-0808">Transferase</keyword>
<comment type="function">
    <text evidence="1">Catalyzes the formation of 4-diphosphocytidyl-2-C-methyl-D-erythritol from CTP and 2-C-methyl-D-erythritol 4-phosphate (MEP).</text>
</comment>
<comment type="catalytic activity">
    <reaction>
        <text>2-C-methyl-D-erythritol 4-phosphate + CTP + H(+) = 4-CDP-2-C-methyl-D-erythritol + diphosphate</text>
        <dbReference type="Rhea" id="RHEA:13429"/>
        <dbReference type="ChEBI" id="CHEBI:15378"/>
        <dbReference type="ChEBI" id="CHEBI:33019"/>
        <dbReference type="ChEBI" id="CHEBI:37563"/>
        <dbReference type="ChEBI" id="CHEBI:57823"/>
        <dbReference type="ChEBI" id="CHEBI:58262"/>
        <dbReference type="EC" id="2.7.7.60"/>
    </reaction>
</comment>
<comment type="pathway">
    <text>Isoprenoid biosynthesis; isopentenyl diphosphate biosynthesis via DXP pathway; isopentenyl diphosphate from 1-deoxy-D-xylulose 5-phosphate: step 2/6.</text>
</comment>
<comment type="similarity">
    <text evidence="2">Belongs to the IspD/TarI cytidylyltransferase family. IspD subfamily.</text>
</comment>
<protein>
    <recommendedName>
        <fullName>2-C-methyl-D-erythritol 4-phosphate cytidylyltransferase</fullName>
        <ecNumber>2.7.7.60</ecNumber>
    </recommendedName>
    <alternativeName>
        <fullName>4-diphosphocytidyl-2C-methyl-D-erythritol synthase</fullName>
    </alternativeName>
    <alternativeName>
        <fullName>MEP cytidylyltransferase</fullName>
        <shortName>MCT</shortName>
    </alternativeName>
</protein>
<organism>
    <name type="scientific">Aquifex aeolicus (strain VF5)</name>
    <dbReference type="NCBI Taxonomy" id="224324"/>
    <lineage>
        <taxon>Bacteria</taxon>
        <taxon>Pseudomonadati</taxon>
        <taxon>Aquificota</taxon>
        <taxon>Aquificia</taxon>
        <taxon>Aquificales</taxon>
        <taxon>Aquificaceae</taxon>
        <taxon>Aquifex</taxon>
    </lineage>
</organism>
<feature type="chain" id="PRO_0000075545" description="2-C-methyl-D-erythritol 4-phosphate cytidylyltransferase">
    <location>
        <begin position="1"/>
        <end position="213"/>
    </location>
</feature>
<feature type="site" description="Transition state stabilizer" evidence="1">
    <location>
        <position position="14"/>
    </location>
</feature>
<feature type="site" description="Transition state stabilizer" evidence="1">
    <location>
        <position position="19"/>
    </location>
</feature>
<feature type="site" description="Positions MEP for the nucleophilic attack" evidence="1">
    <location>
        <position position="138"/>
    </location>
</feature>
<feature type="site" description="Positions MEP for the nucleophilic attack" evidence="1">
    <location>
        <position position="194"/>
    </location>
</feature>
<gene>
    <name type="primary">ispD</name>
    <name type="ordered locus">aq_1323</name>
</gene>
<evidence type="ECO:0000250" key="1"/>
<evidence type="ECO:0000305" key="2"/>
<sequence length="213" mass="23819">MYTAIILAAGRGSRIGFRKQFATLCGKPLFMHSLEKVLDIFEEVILVLPEDFLDKVKVHPKVKKVAGGPERQDSVFNALLQATGDIVVIHDSARPLATKKMFLEVAQLGDYHGKVVASPARDTLKEVVEGKVIKTLNRSLIWHAQTPQAFRRDILLECHMRAKAEGFVGTDDASLLERYGYSVGVVEGSYWNVKITYPEDLEMVKKIMGCEED</sequence>
<dbReference type="EC" id="2.7.7.60"/>
<dbReference type="EMBL" id="AE000657">
    <property type="protein sequence ID" value="AAC07307.1"/>
    <property type="molecule type" value="Genomic_DNA"/>
</dbReference>
<dbReference type="PIR" id="D70414">
    <property type="entry name" value="D70414"/>
</dbReference>
<dbReference type="RefSeq" id="NP_213907.1">
    <property type="nucleotide sequence ID" value="NC_000918.1"/>
</dbReference>
<dbReference type="RefSeq" id="WP_010880845.1">
    <property type="nucleotide sequence ID" value="NC_000918.1"/>
</dbReference>
<dbReference type="SMR" id="O67343"/>
<dbReference type="FunCoup" id="O67343">
    <property type="interactions" value="423"/>
</dbReference>
<dbReference type="STRING" id="224324.aq_1323"/>
<dbReference type="EnsemblBacteria" id="AAC07307">
    <property type="protein sequence ID" value="AAC07307"/>
    <property type="gene ID" value="aq_1323"/>
</dbReference>
<dbReference type="KEGG" id="aae:aq_1323"/>
<dbReference type="PATRIC" id="fig|224324.8.peg.1031"/>
<dbReference type="eggNOG" id="COG1211">
    <property type="taxonomic scope" value="Bacteria"/>
</dbReference>
<dbReference type="HOGENOM" id="CLU_061281_2_2_0"/>
<dbReference type="InParanoid" id="O67343"/>
<dbReference type="OrthoDB" id="9806837at2"/>
<dbReference type="UniPathway" id="UPA00056">
    <property type="reaction ID" value="UER00093"/>
</dbReference>
<dbReference type="Proteomes" id="UP000000798">
    <property type="component" value="Chromosome"/>
</dbReference>
<dbReference type="GO" id="GO:0050518">
    <property type="term" value="F:2-C-methyl-D-erythritol 4-phosphate cytidylyltransferase activity"/>
    <property type="evidence" value="ECO:0000318"/>
    <property type="project" value="GO_Central"/>
</dbReference>
<dbReference type="GO" id="GO:0019288">
    <property type="term" value="P:isopentenyl diphosphate biosynthetic process, methylerythritol 4-phosphate pathway"/>
    <property type="evidence" value="ECO:0007669"/>
    <property type="project" value="UniProtKB-UniRule"/>
</dbReference>
<dbReference type="CDD" id="cd02516">
    <property type="entry name" value="CDP-ME_synthetase"/>
    <property type="match status" value="1"/>
</dbReference>
<dbReference type="FunFam" id="3.90.550.10:FF:000003">
    <property type="entry name" value="2-C-methyl-D-erythritol 4-phosphate cytidylyltransferase"/>
    <property type="match status" value="1"/>
</dbReference>
<dbReference type="Gene3D" id="3.90.550.10">
    <property type="entry name" value="Spore Coat Polysaccharide Biosynthesis Protein SpsA, Chain A"/>
    <property type="match status" value="1"/>
</dbReference>
<dbReference type="HAMAP" id="MF_00108">
    <property type="entry name" value="IspD"/>
    <property type="match status" value="1"/>
</dbReference>
<dbReference type="InterPro" id="IPR001228">
    <property type="entry name" value="IspD"/>
</dbReference>
<dbReference type="InterPro" id="IPR034683">
    <property type="entry name" value="IspD/TarI"/>
</dbReference>
<dbReference type="InterPro" id="IPR050088">
    <property type="entry name" value="IspD/TarI_cytidylyltransf_bact"/>
</dbReference>
<dbReference type="InterPro" id="IPR018294">
    <property type="entry name" value="ISPD_synthase_CS"/>
</dbReference>
<dbReference type="InterPro" id="IPR029044">
    <property type="entry name" value="Nucleotide-diphossugar_trans"/>
</dbReference>
<dbReference type="NCBIfam" id="TIGR00453">
    <property type="entry name" value="ispD"/>
    <property type="match status" value="1"/>
</dbReference>
<dbReference type="PANTHER" id="PTHR32125">
    <property type="entry name" value="2-C-METHYL-D-ERYTHRITOL 4-PHOSPHATE CYTIDYLYLTRANSFERASE, CHLOROPLASTIC"/>
    <property type="match status" value="1"/>
</dbReference>
<dbReference type="PANTHER" id="PTHR32125:SF4">
    <property type="entry name" value="2-C-METHYL-D-ERYTHRITOL 4-PHOSPHATE CYTIDYLYLTRANSFERASE, CHLOROPLASTIC"/>
    <property type="match status" value="1"/>
</dbReference>
<dbReference type="Pfam" id="PF01128">
    <property type="entry name" value="IspD"/>
    <property type="match status" value="1"/>
</dbReference>
<dbReference type="SUPFAM" id="SSF53448">
    <property type="entry name" value="Nucleotide-diphospho-sugar transferases"/>
    <property type="match status" value="1"/>
</dbReference>
<dbReference type="PROSITE" id="PS01295">
    <property type="entry name" value="ISPD"/>
    <property type="match status" value="1"/>
</dbReference>
<accession>O67343</accession>
<reference key="1">
    <citation type="journal article" date="1998" name="Nature">
        <title>The complete genome of the hyperthermophilic bacterium Aquifex aeolicus.</title>
        <authorList>
            <person name="Deckert G."/>
            <person name="Warren P.V."/>
            <person name="Gaasterland T."/>
            <person name="Young W.G."/>
            <person name="Lenox A.L."/>
            <person name="Graham D.E."/>
            <person name="Overbeek R."/>
            <person name="Snead M.A."/>
            <person name="Keller M."/>
            <person name="Aujay M."/>
            <person name="Huber R."/>
            <person name="Feldman R.A."/>
            <person name="Short J.M."/>
            <person name="Olsen G.J."/>
            <person name="Swanson R.V."/>
        </authorList>
    </citation>
    <scope>NUCLEOTIDE SEQUENCE [LARGE SCALE GENOMIC DNA]</scope>
    <source>
        <strain>VF5</strain>
    </source>
</reference>
<proteinExistence type="inferred from homology"/>
<name>ISPD_AQUAE</name>